<organism>
    <name type="scientific">Escherichia coli (strain SE11)</name>
    <dbReference type="NCBI Taxonomy" id="409438"/>
    <lineage>
        <taxon>Bacteria</taxon>
        <taxon>Pseudomonadati</taxon>
        <taxon>Pseudomonadota</taxon>
        <taxon>Gammaproteobacteria</taxon>
        <taxon>Enterobacterales</taxon>
        <taxon>Enterobacteriaceae</taxon>
        <taxon>Escherichia</taxon>
    </lineage>
</organism>
<dbReference type="EMBL" id="AP009240">
    <property type="protein sequence ID" value="BAG80013.1"/>
    <property type="molecule type" value="Genomic_DNA"/>
</dbReference>
<dbReference type="RefSeq" id="WP_000133631.1">
    <property type="nucleotide sequence ID" value="NC_011415.1"/>
</dbReference>
<dbReference type="SMR" id="B6I296"/>
<dbReference type="GeneID" id="75202425"/>
<dbReference type="KEGG" id="ecy:ECSE_4489"/>
<dbReference type="HOGENOM" id="CLU_060699_3_2_6"/>
<dbReference type="Proteomes" id="UP000008199">
    <property type="component" value="Chromosome"/>
</dbReference>
<dbReference type="GO" id="GO:0005737">
    <property type="term" value="C:cytoplasm"/>
    <property type="evidence" value="ECO:0007669"/>
    <property type="project" value="UniProtKB-SubCell"/>
</dbReference>
<dbReference type="GO" id="GO:0003677">
    <property type="term" value="F:DNA binding"/>
    <property type="evidence" value="ECO:0007669"/>
    <property type="project" value="UniProtKB-KW"/>
</dbReference>
<dbReference type="GO" id="GO:0003700">
    <property type="term" value="F:DNA-binding transcription factor activity"/>
    <property type="evidence" value="ECO:0007669"/>
    <property type="project" value="InterPro"/>
</dbReference>
<dbReference type="GO" id="GO:0045892">
    <property type="term" value="P:negative regulation of DNA-templated transcription"/>
    <property type="evidence" value="ECO:0007669"/>
    <property type="project" value="UniProtKB-UniRule"/>
</dbReference>
<dbReference type="FunFam" id="1.10.10.10:FF:000160">
    <property type="entry name" value="HTH-type transcriptional regulator UlaR"/>
    <property type="match status" value="1"/>
</dbReference>
<dbReference type="Gene3D" id="1.10.10.10">
    <property type="entry name" value="Winged helix-like DNA-binding domain superfamily/Winged helix DNA-binding domain"/>
    <property type="match status" value="1"/>
</dbReference>
<dbReference type="HAMAP" id="MF_01563">
    <property type="entry name" value="HTH_type_UlaR"/>
    <property type="match status" value="1"/>
</dbReference>
<dbReference type="InterPro" id="IPR050313">
    <property type="entry name" value="Carb_Metab_HTH_regulators"/>
</dbReference>
<dbReference type="InterPro" id="IPR014036">
    <property type="entry name" value="DeoR-like_C"/>
</dbReference>
<dbReference type="InterPro" id="IPR001034">
    <property type="entry name" value="DeoR_HTH"/>
</dbReference>
<dbReference type="InterPro" id="IPR037171">
    <property type="entry name" value="NagB/RpiA_transferase-like"/>
</dbReference>
<dbReference type="InterPro" id="IPR018356">
    <property type="entry name" value="Tscrpt_reg_HTH_DeoR_CS"/>
</dbReference>
<dbReference type="InterPro" id="IPR023711">
    <property type="entry name" value="Tscrpt_reg_HTH_UlaR"/>
</dbReference>
<dbReference type="InterPro" id="IPR036388">
    <property type="entry name" value="WH-like_DNA-bd_sf"/>
</dbReference>
<dbReference type="InterPro" id="IPR036390">
    <property type="entry name" value="WH_DNA-bd_sf"/>
</dbReference>
<dbReference type="NCBIfam" id="NF010034">
    <property type="entry name" value="PRK13509.1"/>
    <property type="match status" value="1"/>
</dbReference>
<dbReference type="PANTHER" id="PTHR30363">
    <property type="entry name" value="HTH-TYPE TRANSCRIPTIONAL REGULATOR SRLR-RELATED"/>
    <property type="match status" value="1"/>
</dbReference>
<dbReference type="PANTHER" id="PTHR30363:SF55">
    <property type="entry name" value="HTH-TYPE TRANSCRIPTIONAL REGULATOR ULAR"/>
    <property type="match status" value="1"/>
</dbReference>
<dbReference type="Pfam" id="PF00455">
    <property type="entry name" value="DeoRC"/>
    <property type="match status" value="1"/>
</dbReference>
<dbReference type="Pfam" id="PF08220">
    <property type="entry name" value="HTH_DeoR"/>
    <property type="match status" value="1"/>
</dbReference>
<dbReference type="PRINTS" id="PR00037">
    <property type="entry name" value="HTHLACR"/>
</dbReference>
<dbReference type="SMART" id="SM01134">
    <property type="entry name" value="DeoRC"/>
    <property type="match status" value="1"/>
</dbReference>
<dbReference type="SMART" id="SM00420">
    <property type="entry name" value="HTH_DEOR"/>
    <property type="match status" value="1"/>
</dbReference>
<dbReference type="SUPFAM" id="SSF100950">
    <property type="entry name" value="NagB/RpiA/CoA transferase-like"/>
    <property type="match status" value="1"/>
</dbReference>
<dbReference type="SUPFAM" id="SSF46785">
    <property type="entry name" value="Winged helix' DNA-binding domain"/>
    <property type="match status" value="1"/>
</dbReference>
<dbReference type="PROSITE" id="PS00894">
    <property type="entry name" value="HTH_DEOR_1"/>
    <property type="match status" value="1"/>
</dbReference>
<dbReference type="PROSITE" id="PS51000">
    <property type="entry name" value="HTH_DEOR_2"/>
    <property type="match status" value="1"/>
</dbReference>
<gene>
    <name evidence="1" type="primary">ulaR</name>
    <name type="ordered locus">ECSE_4489</name>
</gene>
<feature type="chain" id="PRO_1000190467" description="HTH-type transcriptional regulator UlaR">
    <location>
        <begin position="1"/>
        <end position="251"/>
    </location>
</feature>
<feature type="domain" description="HTH deoR-type" evidence="1">
    <location>
        <begin position="3"/>
        <end position="58"/>
    </location>
</feature>
<feature type="DNA-binding region" description="H-T-H motif" evidence="1">
    <location>
        <begin position="20"/>
        <end position="39"/>
    </location>
</feature>
<accession>B6I296</accession>
<evidence type="ECO:0000255" key="1">
    <source>
        <dbReference type="HAMAP-Rule" id="MF_01563"/>
    </source>
</evidence>
<sequence length="251" mass="27602">MTEAQRHQILLEMLAQLGFVTVEKVVERLGISPATARRDINKLDESGKLKKVRNGAEAITQQRPRWTPMNLHQAQNHDEKVRIAKAASQLVNPGESVVINCGSTAFLLGREMCGKPVQIITNYLPLANYLIDQEHDSVIIMGGQYNKSQSITLSPQGSENSLYAGHWMFTSGKGLTAEGLYKTDMLTAMAEQKMLSVVGKLVVLVDSSKIGERAGMLFSRADQIDMLITGKNANPEILQQLEAQGVSILRV</sequence>
<comment type="function">
    <text evidence="1">Represses ulaG and the ulaABCDEF operon.</text>
</comment>
<comment type="subcellular location">
    <subcellularLocation>
        <location evidence="1">Cytoplasm</location>
    </subcellularLocation>
</comment>
<name>ULAR_ECOSE</name>
<keyword id="KW-0963">Cytoplasm</keyword>
<keyword id="KW-0238">DNA-binding</keyword>
<keyword id="KW-0678">Repressor</keyword>
<keyword id="KW-0804">Transcription</keyword>
<keyword id="KW-0805">Transcription regulation</keyword>
<reference key="1">
    <citation type="journal article" date="2008" name="DNA Res.">
        <title>Complete genome sequence and comparative analysis of the wild-type commensal Escherichia coli strain SE11 isolated from a healthy adult.</title>
        <authorList>
            <person name="Oshima K."/>
            <person name="Toh H."/>
            <person name="Ogura Y."/>
            <person name="Sasamoto H."/>
            <person name="Morita H."/>
            <person name="Park S.-H."/>
            <person name="Ooka T."/>
            <person name="Iyoda S."/>
            <person name="Taylor T.D."/>
            <person name="Hayashi T."/>
            <person name="Itoh K."/>
            <person name="Hattori M."/>
        </authorList>
    </citation>
    <scope>NUCLEOTIDE SEQUENCE [LARGE SCALE GENOMIC DNA]</scope>
    <source>
        <strain>SE11</strain>
    </source>
</reference>
<protein>
    <recommendedName>
        <fullName evidence="1">HTH-type transcriptional regulator UlaR</fullName>
    </recommendedName>
</protein>
<proteinExistence type="inferred from homology"/>